<evidence type="ECO:0000255" key="1">
    <source>
        <dbReference type="HAMAP-Rule" id="MF_01326"/>
    </source>
</evidence>
<evidence type="ECO:0000305" key="2"/>
<sequence length="102" mass="11160">MFLKTGDKVRVITGKDKGQEGTIKKTFAKENRVIVEGVNKIKKHQKPSNMNPNGGIIDTEAPINASNVMLLDPSTNEPTRVGFEVVDGKKVRVAKKSGKQID</sequence>
<comment type="function">
    <text evidence="1">One of two assembly initiator proteins, it binds directly to the 5'-end of the 23S rRNA, where it nucleates assembly of the 50S subunit.</text>
</comment>
<comment type="function">
    <text evidence="1">One of the proteins that surrounds the polypeptide exit tunnel on the outside of the subunit.</text>
</comment>
<comment type="subunit">
    <text evidence="1">Part of the 50S ribosomal subunit.</text>
</comment>
<comment type="similarity">
    <text evidence="1">Belongs to the universal ribosomal protein uL24 family.</text>
</comment>
<organism>
    <name type="scientific">Limosilactobacillus fermentum (strain NBRC 3956 / LMG 18251)</name>
    <name type="common">Lactobacillus fermentum</name>
    <dbReference type="NCBI Taxonomy" id="334390"/>
    <lineage>
        <taxon>Bacteria</taxon>
        <taxon>Bacillati</taxon>
        <taxon>Bacillota</taxon>
        <taxon>Bacilli</taxon>
        <taxon>Lactobacillales</taxon>
        <taxon>Lactobacillaceae</taxon>
        <taxon>Limosilactobacillus</taxon>
    </lineage>
</organism>
<gene>
    <name evidence="1" type="primary">rplX</name>
    <name type="ordered locus">LAF_1504</name>
</gene>
<feature type="chain" id="PRO_1000142008" description="Large ribosomal subunit protein uL24">
    <location>
        <begin position="1"/>
        <end position="102"/>
    </location>
</feature>
<accession>B2GDV8</accession>
<keyword id="KW-1185">Reference proteome</keyword>
<keyword id="KW-0687">Ribonucleoprotein</keyword>
<keyword id="KW-0689">Ribosomal protein</keyword>
<keyword id="KW-0694">RNA-binding</keyword>
<keyword id="KW-0699">rRNA-binding</keyword>
<proteinExistence type="inferred from homology"/>
<reference key="1">
    <citation type="journal article" date="2008" name="DNA Res.">
        <title>Comparative genome analysis of Lactobacillus reuteri and Lactobacillus fermentum reveal a genomic island for reuterin and cobalamin production.</title>
        <authorList>
            <person name="Morita H."/>
            <person name="Toh H."/>
            <person name="Fukuda S."/>
            <person name="Horikawa H."/>
            <person name="Oshima K."/>
            <person name="Suzuki T."/>
            <person name="Murakami M."/>
            <person name="Hisamatsu S."/>
            <person name="Kato Y."/>
            <person name="Takizawa T."/>
            <person name="Fukuoka H."/>
            <person name="Yoshimura T."/>
            <person name="Itoh K."/>
            <person name="O'Sullivan D.J."/>
            <person name="McKay L.L."/>
            <person name="Ohno H."/>
            <person name="Kikuchi J."/>
            <person name="Masaoka T."/>
            <person name="Hattori M."/>
        </authorList>
    </citation>
    <scope>NUCLEOTIDE SEQUENCE [LARGE SCALE GENOMIC DNA]</scope>
    <source>
        <strain>NBRC 3956 / LMG 18251</strain>
    </source>
</reference>
<dbReference type="EMBL" id="AP008937">
    <property type="protein sequence ID" value="BAG27840.1"/>
    <property type="molecule type" value="Genomic_DNA"/>
</dbReference>
<dbReference type="RefSeq" id="WP_003681592.1">
    <property type="nucleotide sequence ID" value="NC_010610.1"/>
</dbReference>
<dbReference type="SMR" id="B2GDV8"/>
<dbReference type="GeneID" id="83716119"/>
<dbReference type="KEGG" id="lfe:LAF_1504"/>
<dbReference type="eggNOG" id="COG0198">
    <property type="taxonomic scope" value="Bacteria"/>
</dbReference>
<dbReference type="HOGENOM" id="CLU_093315_2_0_9"/>
<dbReference type="Proteomes" id="UP000001697">
    <property type="component" value="Chromosome"/>
</dbReference>
<dbReference type="GO" id="GO:1990904">
    <property type="term" value="C:ribonucleoprotein complex"/>
    <property type="evidence" value="ECO:0007669"/>
    <property type="project" value="UniProtKB-KW"/>
</dbReference>
<dbReference type="GO" id="GO:0005840">
    <property type="term" value="C:ribosome"/>
    <property type="evidence" value="ECO:0007669"/>
    <property type="project" value="UniProtKB-KW"/>
</dbReference>
<dbReference type="GO" id="GO:0019843">
    <property type="term" value="F:rRNA binding"/>
    <property type="evidence" value="ECO:0007669"/>
    <property type="project" value="UniProtKB-UniRule"/>
</dbReference>
<dbReference type="GO" id="GO:0003735">
    <property type="term" value="F:structural constituent of ribosome"/>
    <property type="evidence" value="ECO:0007669"/>
    <property type="project" value="InterPro"/>
</dbReference>
<dbReference type="GO" id="GO:0006412">
    <property type="term" value="P:translation"/>
    <property type="evidence" value="ECO:0007669"/>
    <property type="project" value="UniProtKB-UniRule"/>
</dbReference>
<dbReference type="CDD" id="cd06089">
    <property type="entry name" value="KOW_RPL26"/>
    <property type="match status" value="1"/>
</dbReference>
<dbReference type="FunFam" id="2.30.30.30:FF:000004">
    <property type="entry name" value="50S ribosomal protein L24"/>
    <property type="match status" value="1"/>
</dbReference>
<dbReference type="Gene3D" id="2.30.30.30">
    <property type="match status" value="1"/>
</dbReference>
<dbReference type="HAMAP" id="MF_01326_B">
    <property type="entry name" value="Ribosomal_uL24_B"/>
    <property type="match status" value="1"/>
</dbReference>
<dbReference type="InterPro" id="IPR005824">
    <property type="entry name" value="KOW"/>
</dbReference>
<dbReference type="InterPro" id="IPR014722">
    <property type="entry name" value="Rib_uL2_dom2"/>
</dbReference>
<dbReference type="InterPro" id="IPR003256">
    <property type="entry name" value="Ribosomal_uL24"/>
</dbReference>
<dbReference type="InterPro" id="IPR005825">
    <property type="entry name" value="Ribosomal_uL24_CS"/>
</dbReference>
<dbReference type="InterPro" id="IPR041988">
    <property type="entry name" value="Ribosomal_uL24_KOW"/>
</dbReference>
<dbReference type="InterPro" id="IPR008991">
    <property type="entry name" value="Translation_prot_SH3-like_sf"/>
</dbReference>
<dbReference type="NCBIfam" id="TIGR01079">
    <property type="entry name" value="rplX_bact"/>
    <property type="match status" value="1"/>
</dbReference>
<dbReference type="PANTHER" id="PTHR12903">
    <property type="entry name" value="MITOCHONDRIAL RIBOSOMAL PROTEIN L24"/>
    <property type="match status" value="1"/>
</dbReference>
<dbReference type="Pfam" id="PF00467">
    <property type="entry name" value="KOW"/>
    <property type="match status" value="1"/>
</dbReference>
<dbReference type="Pfam" id="PF17136">
    <property type="entry name" value="ribosomal_L24"/>
    <property type="match status" value="1"/>
</dbReference>
<dbReference type="SMART" id="SM00739">
    <property type="entry name" value="KOW"/>
    <property type="match status" value="1"/>
</dbReference>
<dbReference type="SUPFAM" id="SSF50104">
    <property type="entry name" value="Translation proteins SH3-like domain"/>
    <property type="match status" value="1"/>
</dbReference>
<dbReference type="PROSITE" id="PS01108">
    <property type="entry name" value="RIBOSOMAL_L24"/>
    <property type="match status" value="1"/>
</dbReference>
<name>RL24_LIMF3</name>
<protein>
    <recommendedName>
        <fullName evidence="1">Large ribosomal subunit protein uL24</fullName>
    </recommendedName>
    <alternativeName>
        <fullName evidence="2">50S ribosomal protein L24</fullName>
    </alternativeName>
</protein>